<comment type="function">
    <text evidence="1">Catalyzes the synthesis of alpha-ribazole-5'-phosphate from nicotinate mononucleotide (NAMN) and 5,6-dimethylbenzimidazole (DMB).</text>
</comment>
<comment type="catalytic activity">
    <reaction evidence="1">
        <text>5,6-dimethylbenzimidazole + nicotinate beta-D-ribonucleotide = alpha-ribazole 5'-phosphate + nicotinate + H(+)</text>
        <dbReference type="Rhea" id="RHEA:11196"/>
        <dbReference type="ChEBI" id="CHEBI:15378"/>
        <dbReference type="ChEBI" id="CHEBI:15890"/>
        <dbReference type="ChEBI" id="CHEBI:32544"/>
        <dbReference type="ChEBI" id="CHEBI:57502"/>
        <dbReference type="ChEBI" id="CHEBI:57918"/>
        <dbReference type="EC" id="2.4.2.21"/>
    </reaction>
</comment>
<comment type="pathway">
    <text evidence="1">Nucleoside biosynthesis; alpha-ribazole biosynthesis; alpha-ribazole from 5,6-dimethylbenzimidazole: step 1/2.</text>
</comment>
<comment type="similarity">
    <text evidence="1">Belongs to the CobT family.</text>
</comment>
<organism>
    <name type="scientific">Janthinobacterium sp. (strain Marseille)</name>
    <name type="common">Minibacterium massiliensis</name>
    <dbReference type="NCBI Taxonomy" id="375286"/>
    <lineage>
        <taxon>Bacteria</taxon>
        <taxon>Pseudomonadati</taxon>
        <taxon>Pseudomonadota</taxon>
        <taxon>Betaproteobacteria</taxon>
        <taxon>Burkholderiales</taxon>
        <taxon>Oxalobacteraceae</taxon>
        <taxon>Janthinobacterium</taxon>
    </lineage>
</organism>
<keyword id="KW-0169">Cobalamin biosynthesis</keyword>
<keyword id="KW-0328">Glycosyltransferase</keyword>
<keyword id="KW-0808">Transferase</keyword>
<gene>
    <name evidence="1" type="primary">cobT</name>
    <name type="ordered locus">mma_1087</name>
</gene>
<name>COBT_JANMA</name>
<reference key="1">
    <citation type="journal article" date="2007" name="PLoS Genet.">
        <title>Genome analysis of Minibacterium massiliensis highlights the convergent evolution of water-living bacteria.</title>
        <authorList>
            <person name="Audic S."/>
            <person name="Robert C."/>
            <person name="Campagna B."/>
            <person name="Parinello H."/>
            <person name="Claverie J.-M."/>
            <person name="Raoult D."/>
            <person name="Drancourt M."/>
        </authorList>
    </citation>
    <scope>NUCLEOTIDE SEQUENCE [LARGE SCALE GENOMIC DNA]</scope>
    <source>
        <strain>Marseille</strain>
    </source>
</reference>
<dbReference type="EC" id="2.4.2.21" evidence="1"/>
<dbReference type="EMBL" id="CP000269">
    <property type="protein sequence ID" value="ABR88861.1"/>
    <property type="molecule type" value="Genomic_DNA"/>
</dbReference>
<dbReference type="RefSeq" id="WP_012078944.1">
    <property type="nucleotide sequence ID" value="NC_009659.1"/>
</dbReference>
<dbReference type="SMR" id="A6SWY0"/>
<dbReference type="STRING" id="375286.mma_1087"/>
<dbReference type="KEGG" id="mms:mma_1087"/>
<dbReference type="eggNOG" id="COG2038">
    <property type="taxonomic scope" value="Bacteria"/>
</dbReference>
<dbReference type="HOGENOM" id="CLU_002982_0_0_4"/>
<dbReference type="OrthoDB" id="9781491at2"/>
<dbReference type="UniPathway" id="UPA00061">
    <property type="reaction ID" value="UER00516"/>
</dbReference>
<dbReference type="Proteomes" id="UP000006388">
    <property type="component" value="Chromosome"/>
</dbReference>
<dbReference type="GO" id="GO:0008939">
    <property type="term" value="F:nicotinate-nucleotide-dimethylbenzimidazole phosphoribosyltransferase activity"/>
    <property type="evidence" value="ECO:0007669"/>
    <property type="project" value="UniProtKB-UniRule"/>
</dbReference>
<dbReference type="GO" id="GO:0009236">
    <property type="term" value="P:cobalamin biosynthetic process"/>
    <property type="evidence" value="ECO:0007669"/>
    <property type="project" value="UniProtKB-KW"/>
</dbReference>
<dbReference type="CDD" id="cd02439">
    <property type="entry name" value="DMB-PRT_CobT"/>
    <property type="match status" value="1"/>
</dbReference>
<dbReference type="FunFam" id="3.40.50.10210:FF:000001">
    <property type="entry name" value="Nicotinate-nucleotide--dimethylbenzimidazole phosphoribosyltransferase"/>
    <property type="match status" value="1"/>
</dbReference>
<dbReference type="Gene3D" id="1.10.1610.10">
    <property type="match status" value="1"/>
</dbReference>
<dbReference type="Gene3D" id="3.40.50.10210">
    <property type="match status" value="1"/>
</dbReference>
<dbReference type="HAMAP" id="MF_00230">
    <property type="entry name" value="CobT"/>
    <property type="match status" value="1"/>
</dbReference>
<dbReference type="InterPro" id="IPR003200">
    <property type="entry name" value="Nict_dMeBzImd_PRibTrfase"/>
</dbReference>
<dbReference type="InterPro" id="IPR017846">
    <property type="entry name" value="Nict_dMeBzImd_PRibTrfase_bact"/>
</dbReference>
<dbReference type="InterPro" id="IPR023195">
    <property type="entry name" value="Nict_dMeBzImd_PRibTrfase_N"/>
</dbReference>
<dbReference type="InterPro" id="IPR036087">
    <property type="entry name" value="Nict_dMeBzImd_PRibTrfase_sf"/>
</dbReference>
<dbReference type="NCBIfam" id="TIGR03160">
    <property type="entry name" value="cobT_DBIPRT"/>
    <property type="match status" value="1"/>
</dbReference>
<dbReference type="NCBIfam" id="NF000996">
    <property type="entry name" value="PRK00105.1"/>
    <property type="match status" value="1"/>
</dbReference>
<dbReference type="PANTHER" id="PTHR43463">
    <property type="entry name" value="NICOTINATE-NUCLEOTIDE--DIMETHYLBENZIMIDAZOLE PHOSPHORIBOSYLTRANSFERASE"/>
    <property type="match status" value="1"/>
</dbReference>
<dbReference type="PANTHER" id="PTHR43463:SF1">
    <property type="entry name" value="NICOTINATE-NUCLEOTIDE--DIMETHYLBENZIMIDAZOLE PHOSPHORIBOSYLTRANSFERASE"/>
    <property type="match status" value="1"/>
</dbReference>
<dbReference type="Pfam" id="PF02277">
    <property type="entry name" value="DBI_PRT"/>
    <property type="match status" value="1"/>
</dbReference>
<dbReference type="SUPFAM" id="SSF52733">
    <property type="entry name" value="Nicotinate mononucleotide:5,6-dimethylbenzimidazole phosphoribosyltransferase (CobT)"/>
    <property type="match status" value="1"/>
</dbReference>
<evidence type="ECO:0000255" key="1">
    <source>
        <dbReference type="HAMAP-Rule" id="MF_00230"/>
    </source>
</evidence>
<proteinExistence type="inferred from homology"/>
<accession>A6SWY0</accession>
<sequence length="345" mass="36347">MITIVSTENDALSAQLAAAINNKTKPLGSLGMLETLARQIGLIQQTTQAQIIDPALIVFAADHGIVAENVSAYPQSVTWQMVENFLAGGAAINVFARQNHCALHIVDAGVNHDFGRREGLLDRKVAYGTRNFAQETAMSAEQCAQAVQAGMDLAAGIKGNVLGFGEMGIGNTTAAAAIMQAMTKLPAAECVGAGTGLAHEGILHKQKVVQDAVAYHAAIVAKNAPLDILATFGGFEIAMIVGAMLKAAERRMVLLIDGFIITSALMIAARLQPSILDYCVFAHCSDEHGHRQMISHLGGRPVLQMGLRLGEGTGSVLALPLLHAAVNFLREMATFESADVSQQNA</sequence>
<protein>
    <recommendedName>
        <fullName evidence="1">Nicotinate-nucleotide--dimethylbenzimidazole phosphoribosyltransferase</fullName>
        <shortName evidence="1">NN:DBI PRT</shortName>
        <ecNumber evidence="1">2.4.2.21</ecNumber>
    </recommendedName>
    <alternativeName>
        <fullName evidence="1">N(1)-alpha-phosphoribosyltransferase</fullName>
    </alternativeName>
</protein>
<feature type="chain" id="PRO_1000118967" description="Nicotinate-nucleotide--dimethylbenzimidazole phosphoribosyltransferase">
    <location>
        <begin position="1"/>
        <end position="345"/>
    </location>
</feature>
<feature type="active site" description="Proton acceptor" evidence="1">
    <location>
        <position position="311"/>
    </location>
</feature>